<evidence type="ECO:0000250" key="1">
    <source>
        <dbReference type="UniProtKB" id="Q9LNF2"/>
    </source>
</evidence>
<evidence type="ECO:0000255" key="2"/>
<evidence type="ECO:0000255" key="3">
    <source>
        <dbReference type="PROSITE-ProRule" id="PRU00498"/>
    </source>
</evidence>
<evidence type="ECO:0000269" key="4">
    <source>
    </source>
</evidence>
<evidence type="ECO:0000303" key="5">
    <source>
    </source>
</evidence>
<evidence type="ECO:0000305" key="6"/>
<evidence type="ECO:0000312" key="7">
    <source>
        <dbReference type="Araport" id="AT5G46960"/>
    </source>
</evidence>
<evidence type="ECO:0000312" key="8">
    <source>
        <dbReference type="EMBL" id="BAB10235.1"/>
    </source>
</evidence>
<comment type="function">
    <text evidence="4">Pectin methylesterase (PME) inhibitor involved in the maintenance of cell wall integrity in response to necrotrophic pathogens. Modulates PME activity and pectin methylesterification during infection by Botrytis cinerea and contributes to resistance against the pathogen.</text>
</comment>
<comment type="subcellular location">
    <subcellularLocation>
        <location evidence="4">Secreted</location>
        <location evidence="4">Extracellular space</location>
        <location evidence="4">Apoplast</location>
    </subcellularLocation>
</comment>
<comment type="induction">
    <text evidence="4">Induced in leaves during infection by Botrytis cinerea.</text>
</comment>
<comment type="disruption phenotype">
    <text evidence="4">No visible phenotype under normal growth conditions, but mutant plants have enhanced susceptibility to infection by the necrotrophic pathogen Botrytis cinerea.</text>
</comment>
<comment type="similarity">
    <text evidence="6">Belongs to the PMEI family.</text>
</comment>
<sequence>MKFLVSLVIFSLFLNGFATAQTLIQDSCKKAFAKDPQLSYDFCVNSLTQDPQSKAATTLESLVLASTKTAAAKITNLKGIVAQDLKDQRYQDIVEDLKLCLGFYNDANDDLTTALANIKSRDYQGANINLSAALDVPGNCEDDFKEAKKTSPITNENSILFKTILIPLAFTNML</sequence>
<keyword id="KW-0052">Apoplast</keyword>
<keyword id="KW-1015">Disulfide bond</keyword>
<keyword id="KW-0325">Glycoprotein</keyword>
<keyword id="KW-1185">Reference proteome</keyword>
<keyword id="KW-0964">Secreted</keyword>
<keyword id="KW-0732">Signal</keyword>
<dbReference type="EMBL" id="AB013394">
    <property type="protein sequence ID" value="BAB10235.1"/>
    <property type="molecule type" value="Genomic_DNA"/>
</dbReference>
<dbReference type="EMBL" id="CP002688">
    <property type="protein sequence ID" value="AED95452.1"/>
    <property type="molecule type" value="Genomic_DNA"/>
</dbReference>
<dbReference type="RefSeq" id="NP_568673.1">
    <property type="nucleotide sequence ID" value="NM_124067.2"/>
</dbReference>
<dbReference type="SMR" id="Q9FJR5"/>
<dbReference type="FunCoup" id="Q9FJR5">
    <property type="interactions" value="156"/>
</dbReference>
<dbReference type="STRING" id="3702.Q9FJR5"/>
<dbReference type="GlyCosmos" id="Q9FJR5">
    <property type="glycosylation" value="1 site, No reported glycans"/>
</dbReference>
<dbReference type="GlyGen" id="Q9FJR5">
    <property type="glycosylation" value="1 site"/>
</dbReference>
<dbReference type="iPTMnet" id="Q9FJR5"/>
<dbReference type="PaxDb" id="3702-AT5G46960.1"/>
<dbReference type="ProteomicsDB" id="226156"/>
<dbReference type="EnsemblPlants" id="AT5G46960.1">
    <property type="protein sequence ID" value="AT5G46960.1"/>
    <property type="gene ID" value="AT5G46960"/>
</dbReference>
<dbReference type="GeneID" id="834742"/>
<dbReference type="Gramene" id="AT5G46960.1">
    <property type="protein sequence ID" value="AT5G46960.1"/>
    <property type="gene ID" value="AT5G46960"/>
</dbReference>
<dbReference type="KEGG" id="ath:AT5G46960"/>
<dbReference type="Araport" id="AT5G46960"/>
<dbReference type="TAIR" id="AT5G46960">
    <property type="gene designation" value="ATPMEI12"/>
</dbReference>
<dbReference type="HOGENOM" id="CLU_033761_7_2_1"/>
<dbReference type="InParanoid" id="Q9FJR5"/>
<dbReference type="OMA" id="FHSTIMG"/>
<dbReference type="PhylomeDB" id="Q9FJR5"/>
<dbReference type="PRO" id="PR:Q9FJR5"/>
<dbReference type="Proteomes" id="UP000006548">
    <property type="component" value="Chromosome 5"/>
</dbReference>
<dbReference type="ExpressionAtlas" id="Q9FJR5">
    <property type="expression patterns" value="baseline and differential"/>
</dbReference>
<dbReference type="GO" id="GO:0048046">
    <property type="term" value="C:apoplast"/>
    <property type="evidence" value="ECO:0000314"/>
    <property type="project" value="UniProtKB"/>
</dbReference>
<dbReference type="GO" id="GO:0046910">
    <property type="term" value="F:pectinesterase inhibitor activity"/>
    <property type="evidence" value="ECO:0000314"/>
    <property type="project" value="UniProtKB"/>
</dbReference>
<dbReference type="GO" id="GO:0009793">
    <property type="term" value="P:embryo development ending in seed dormancy"/>
    <property type="evidence" value="ECO:0000315"/>
    <property type="project" value="TAIR"/>
</dbReference>
<dbReference type="GO" id="GO:0071669">
    <property type="term" value="P:plant-type cell wall organization or biogenesis"/>
    <property type="evidence" value="ECO:0000315"/>
    <property type="project" value="UniProtKB"/>
</dbReference>
<dbReference type="CDD" id="cd15795">
    <property type="entry name" value="PMEI-Pla_a_1_like"/>
    <property type="match status" value="1"/>
</dbReference>
<dbReference type="FunFam" id="1.20.140.40:FF:000002">
    <property type="entry name" value="Putative invertase inhibitor"/>
    <property type="match status" value="1"/>
</dbReference>
<dbReference type="Gene3D" id="1.20.140.40">
    <property type="entry name" value="Invertase/pectin methylesterase inhibitor family protein"/>
    <property type="match status" value="1"/>
</dbReference>
<dbReference type="InterPro" id="IPR035513">
    <property type="entry name" value="Invertase/methylesterase_inhib"/>
</dbReference>
<dbReference type="InterPro" id="IPR006501">
    <property type="entry name" value="Pectinesterase_inhib_dom"/>
</dbReference>
<dbReference type="InterPro" id="IPR034088">
    <property type="entry name" value="Pla_a_1-like"/>
</dbReference>
<dbReference type="NCBIfam" id="TIGR01614">
    <property type="entry name" value="PME_inhib"/>
    <property type="match status" value="1"/>
</dbReference>
<dbReference type="PANTHER" id="PTHR35357">
    <property type="entry name" value="OS02G0537100 PROTEIN"/>
    <property type="match status" value="1"/>
</dbReference>
<dbReference type="PANTHER" id="PTHR35357:SF17">
    <property type="entry name" value="PECTINESTERASE INHIBITOR 12"/>
    <property type="match status" value="1"/>
</dbReference>
<dbReference type="Pfam" id="PF04043">
    <property type="entry name" value="PMEI"/>
    <property type="match status" value="1"/>
</dbReference>
<dbReference type="SMART" id="SM00856">
    <property type="entry name" value="PMEI"/>
    <property type="match status" value="1"/>
</dbReference>
<dbReference type="SUPFAM" id="SSF101148">
    <property type="entry name" value="Plant invertase/pectin methylesterase inhibitor"/>
    <property type="match status" value="1"/>
</dbReference>
<name>PMI12_ARATH</name>
<reference key="1">
    <citation type="journal article" date="1998" name="DNA Res.">
        <title>Structural analysis of Arabidopsis thaliana chromosome 5. VI. Sequence features of the regions of 1,367,185 bp covered by 19 physically assigned P1 and TAC clones.</title>
        <authorList>
            <person name="Kotani H."/>
            <person name="Nakamura Y."/>
            <person name="Sato S."/>
            <person name="Asamizu E."/>
            <person name="Kaneko T."/>
            <person name="Miyajima N."/>
            <person name="Tabata S."/>
        </authorList>
    </citation>
    <scope>NUCLEOTIDE SEQUENCE [LARGE SCALE GENOMIC DNA]</scope>
    <source>
        <strain>cv. Columbia</strain>
    </source>
</reference>
<reference key="2">
    <citation type="journal article" date="2017" name="Plant J.">
        <title>Araport11: a complete reannotation of the Arabidopsis thaliana reference genome.</title>
        <authorList>
            <person name="Cheng C.Y."/>
            <person name="Krishnakumar V."/>
            <person name="Chan A.P."/>
            <person name="Thibaud-Nissen F."/>
            <person name="Schobel S."/>
            <person name="Town C.D."/>
        </authorList>
    </citation>
    <scope>GENOME REANNOTATION</scope>
    <source>
        <strain>cv. Columbia</strain>
    </source>
</reference>
<reference key="3">
    <citation type="journal article" date="2017" name="Plant Physiol.">
        <title>Three pectin methyl esterase inhibitors protect cell wall integrity for immunity to Botrytis.</title>
        <authorList>
            <person name="Lionetti V."/>
            <person name="Fabri E."/>
            <person name="De Caroli M."/>
            <person name="Hansen A.R."/>
            <person name="Willats W.G."/>
            <person name="Piro G."/>
            <person name="Bellincampi D."/>
        </authorList>
    </citation>
    <scope>FUNCTION</scope>
    <scope>SUBCELLULAR LOCATION</scope>
    <scope>INDUCTION</scope>
    <scope>DISRUPTION PHENOTYPE</scope>
</reference>
<organism>
    <name type="scientific">Arabidopsis thaliana</name>
    <name type="common">Mouse-ear cress</name>
    <dbReference type="NCBI Taxonomy" id="3702"/>
    <lineage>
        <taxon>Eukaryota</taxon>
        <taxon>Viridiplantae</taxon>
        <taxon>Streptophyta</taxon>
        <taxon>Embryophyta</taxon>
        <taxon>Tracheophyta</taxon>
        <taxon>Spermatophyta</taxon>
        <taxon>Magnoliopsida</taxon>
        <taxon>eudicotyledons</taxon>
        <taxon>Gunneridae</taxon>
        <taxon>Pentapetalae</taxon>
        <taxon>rosids</taxon>
        <taxon>malvids</taxon>
        <taxon>Brassicales</taxon>
        <taxon>Brassicaceae</taxon>
        <taxon>Camelineae</taxon>
        <taxon>Arabidopsis</taxon>
    </lineage>
</organism>
<proteinExistence type="evidence at transcript level"/>
<gene>
    <name evidence="5" type="primary">PMEI12</name>
    <name evidence="7" type="ordered locus">At5g46960</name>
    <name evidence="8" type="ORF">MQD22.10</name>
</gene>
<accession>Q9FJR5</accession>
<protein>
    <recommendedName>
        <fullName evidence="6">Pectinesterase inhibitor 12</fullName>
    </recommendedName>
    <alternativeName>
        <fullName evidence="5">Pectin methylesterase inhibitor 12</fullName>
        <shortName evidence="5">AtPMEI12</shortName>
    </alternativeName>
</protein>
<feature type="signal peptide" evidence="2">
    <location>
        <begin position="1"/>
        <end position="20"/>
    </location>
</feature>
<feature type="chain" id="PRO_5008429892" description="Pectinesterase inhibitor 12">
    <location>
        <begin position="21"/>
        <end position="174"/>
    </location>
</feature>
<feature type="glycosylation site" description="N-linked (GlcNAc...) asparagine" evidence="3">
    <location>
        <position position="129"/>
    </location>
</feature>
<feature type="disulfide bond" evidence="1">
    <location>
        <begin position="28"/>
        <end position="43"/>
    </location>
</feature>
<feature type="disulfide bond" evidence="1">
    <location>
        <begin position="100"/>
        <end position="140"/>
    </location>
</feature>